<dbReference type="EC" id="4.2.3.31" evidence="2"/>
<dbReference type="EMBL" id="AB183750">
    <property type="protein sequence ID" value="BAD86798.1"/>
    <property type="molecule type" value="Genomic_DNA"/>
</dbReference>
<dbReference type="SMR" id="Q5KSN4"/>
<dbReference type="KEGG" id="ag:BAD86798"/>
<dbReference type="BioCyc" id="MetaCyc:MONOMER-13867"/>
<dbReference type="GO" id="GO:0052674">
    <property type="term" value="F:ent-pimara-9(11),15-diene synthase activity"/>
    <property type="evidence" value="ECO:0000314"/>
    <property type="project" value="UniProtKB"/>
</dbReference>
<dbReference type="GO" id="GO:0017000">
    <property type="term" value="P:antibiotic biosynthetic process"/>
    <property type="evidence" value="ECO:0007669"/>
    <property type="project" value="UniProtKB-KW"/>
</dbReference>
<dbReference type="Gene3D" id="1.10.600.10">
    <property type="entry name" value="Farnesyl Diphosphate Synthase"/>
    <property type="match status" value="1"/>
</dbReference>
<dbReference type="InterPro" id="IPR008949">
    <property type="entry name" value="Isoprenoid_synthase_dom_sf"/>
</dbReference>
<dbReference type="SUPFAM" id="SSF48576">
    <property type="entry name" value="Terpenoid synthases"/>
    <property type="match status" value="1"/>
</dbReference>
<evidence type="ECO:0000269" key="1">
    <source>
    </source>
</evidence>
<evidence type="ECO:0000269" key="2">
    <source>
    </source>
</evidence>
<evidence type="ECO:0000303" key="3">
    <source>
    </source>
</evidence>
<evidence type="ECO:0000305" key="4"/>
<protein>
    <recommendedName>
        <fullName evidence="3">Ent-pimara-9(11),15-diene synthase</fullName>
        <shortName evidence="3">PMD synthase</shortName>
        <ecNumber evidence="2">4.2.3.31</ecNumber>
    </recommendedName>
</protein>
<proteinExistence type="evidence at protein level"/>
<comment type="function">
    <text evidence="1 2">Involved in viguiepinol biosynthesis. Catalyzes the conversion of copalyl diphosphate (ent-CDP) into pimara-9(11),15-diene (PMD).</text>
</comment>
<comment type="catalytic activity">
    <reaction evidence="2">
        <text>ent-copalyl diphosphate = ent-pimara-9(11),15-diene + diphosphate</text>
        <dbReference type="Rhea" id="RHEA:25544"/>
        <dbReference type="ChEBI" id="CHEBI:33019"/>
        <dbReference type="ChEBI" id="CHEBI:50064"/>
        <dbReference type="ChEBI" id="CHEBI:58553"/>
        <dbReference type="EC" id="4.2.3.31"/>
    </reaction>
</comment>
<comment type="cofactor">
    <cofactor evidence="2">
        <name>a divalent metal cation</name>
        <dbReference type="ChEBI" id="CHEBI:60240"/>
    </cofactor>
    <text evidence="2">Activity is highest with Mg(2+). Can also use Co(2+), Zn(2+) and Ni(2+).</text>
</comment>
<comment type="biophysicochemical properties">
    <kinetics>
        <KM evidence="2">2.6 uM for ent-CDP</KM>
        <text evidence="2">kcat is 0.0014 sec(-1).</text>
    </kinetics>
    <phDependence>
        <text evidence="2">Optimum pH is 7.0.</text>
    </phDependence>
    <temperatureDependence>
        <text evidence="2">Optimum temperature is 30 degrees Celsius.</text>
    </temperatureDependence>
</comment>
<comment type="pathway">
    <text evidence="4">Antibiotic biosynthesis.</text>
</comment>
<comment type="subunit">
    <text evidence="2">Monomer.</text>
</comment>
<comment type="similarity">
    <text evidence="4">Belongs to the terpene synthase family.</text>
</comment>
<sequence>MRARHRVALKVLADLRSWAAEYPQVLEATPIEALAISTAAISPWRGANELRLSAPDVRCGPTPLDDHVEQNVRSLDELDDLFGRCEAIVRGGDRDDGHPLLASLSGWQSALERAPHYPKLAGLWGDRFAEALRGERYDWTAGLARDRGEGPSDPQEYLTYAASSNAWITHFPRWATSDRDDLLDGLPVLDNALEAIEVAVRLSNDLATFERERAEPGQNNILMYDTSPDWVHDELDRHSRKAQEQLDPLATAGFPPAVELLRLLDWSVTFYSGADFRGWGSDRDLTGPSGLPSDM</sequence>
<accession>Q5KSN4</accession>
<name>PMDS_STREO</name>
<feature type="chain" id="PRO_0000431698" description="Ent-pimara-9(11),15-diene synthase">
    <location>
        <begin position="1"/>
        <end position="295"/>
    </location>
</feature>
<reference key="1">
    <citation type="journal article" date="2004" name="J. Antibiot.">
        <title>Presence of copalyl diphosphate synthase gene in an actinomycete possessing the mevalonate pathway.</title>
        <authorList>
            <person name="Kawasaki T."/>
            <person name="Kuzuyama T."/>
            <person name="Kuwamori Y."/>
            <person name="Matsuura N."/>
            <person name="Itoh N."/>
            <person name="Furihata K."/>
            <person name="Seto H."/>
            <person name="Dairi T."/>
        </authorList>
    </citation>
    <scope>NUCLEOTIDE SEQUENCE [GENOMIC DNA]</scope>
    <source>
        <strain>KO-3988</strain>
    </source>
</reference>
<reference key="2">
    <citation type="journal article" date="2006" name="J. Bacteriol.">
        <title>Biosynthesis of a natural polyketide-isoprenoid hybrid compound, furaquinocin A: identification and heterologous expression of the gene cluster.</title>
        <authorList>
            <person name="Kawasaki T."/>
            <person name="Hayashi Y."/>
            <person name="Kuzuyama T."/>
            <person name="Furihata K."/>
            <person name="Itoh N."/>
            <person name="Seto H."/>
            <person name="Dairi T."/>
        </authorList>
    </citation>
    <scope>PROBABLE FUNCTION</scope>
    <source>
        <strain>KO-3988</strain>
    </source>
</reference>
<reference key="3">
    <citation type="journal article" date="2007" name="J. Biochem.">
        <title>Functional analysis of eubacterial ent-copalyl diphosphate synthase and pimara-9(11),15-diene synthase with unique primary sequences.</title>
        <authorList>
            <person name="Ikeda C."/>
            <person name="Hayashi Y."/>
            <person name="Itoh N."/>
            <person name="Seto H."/>
            <person name="Dairi T."/>
        </authorList>
    </citation>
    <scope>FUNCTION</scope>
    <scope>CATALYTIC ACTIVITY</scope>
    <scope>COFACTOR</scope>
    <scope>BIOPHYSICOCHEMICAL PROPERTIES</scope>
    <scope>SUBUNIT</scope>
    <source>
        <strain>KO-3988</strain>
    </source>
</reference>
<organism>
    <name type="scientific">Streptomyces sp. (strain KO-3988)</name>
    <dbReference type="NCBI Taxonomy" id="285219"/>
    <lineage>
        <taxon>Bacteria</taxon>
        <taxon>Bacillati</taxon>
        <taxon>Actinomycetota</taxon>
        <taxon>Actinomycetes</taxon>
        <taxon>Kitasatosporales</taxon>
        <taxon>Streptomycetaceae</taxon>
        <taxon>Streptomyces</taxon>
    </lineage>
</organism>
<keyword id="KW-0045">Antibiotic biosynthesis</keyword>
<keyword id="KW-0456">Lyase</keyword>